<name>HSFA3_ARATH</name>
<reference key="1">
    <citation type="journal article" date="2000" name="Nature">
        <title>Sequence and analysis of chromosome 5 of the plant Arabidopsis thaliana.</title>
        <authorList>
            <person name="Tabata S."/>
            <person name="Kaneko T."/>
            <person name="Nakamura Y."/>
            <person name="Kotani H."/>
            <person name="Kato T."/>
            <person name="Asamizu E."/>
            <person name="Miyajima N."/>
            <person name="Sasamoto S."/>
            <person name="Kimura T."/>
            <person name="Hosouchi T."/>
            <person name="Kawashima K."/>
            <person name="Kohara M."/>
            <person name="Matsumoto M."/>
            <person name="Matsuno A."/>
            <person name="Muraki A."/>
            <person name="Nakayama S."/>
            <person name="Nakazaki N."/>
            <person name="Naruo K."/>
            <person name="Okumura S."/>
            <person name="Shinpo S."/>
            <person name="Takeuchi C."/>
            <person name="Wada T."/>
            <person name="Watanabe A."/>
            <person name="Yamada M."/>
            <person name="Yasuda M."/>
            <person name="Sato S."/>
            <person name="de la Bastide M."/>
            <person name="Huang E."/>
            <person name="Spiegel L."/>
            <person name="Gnoj L."/>
            <person name="O'Shaughnessy A."/>
            <person name="Preston R."/>
            <person name="Habermann K."/>
            <person name="Murray J."/>
            <person name="Johnson D."/>
            <person name="Rohlfing T."/>
            <person name="Nelson J."/>
            <person name="Stoneking T."/>
            <person name="Pepin K."/>
            <person name="Spieth J."/>
            <person name="Sekhon M."/>
            <person name="Armstrong J."/>
            <person name="Becker M."/>
            <person name="Belter E."/>
            <person name="Cordum H."/>
            <person name="Cordes M."/>
            <person name="Courtney L."/>
            <person name="Courtney W."/>
            <person name="Dante M."/>
            <person name="Du H."/>
            <person name="Edwards J."/>
            <person name="Fryman J."/>
            <person name="Haakensen B."/>
            <person name="Lamar E."/>
            <person name="Latreille P."/>
            <person name="Leonard S."/>
            <person name="Meyer R."/>
            <person name="Mulvaney E."/>
            <person name="Ozersky P."/>
            <person name="Riley A."/>
            <person name="Strowmatt C."/>
            <person name="Wagner-McPherson C."/>
            <person name="Wollam A."/>
            <person name="Yoakum M."/>
            <person name="Bell M."/>
            <person name="Dedhia N."/>
            <person name="Parnell L."/>
            <person name="Shah R."/>
            <person name="Rodriguez M."/>
            <person name="Hoon See L."/>
            <person name="Vil D."/>
            <person name="Baker J."/>
            <person name="Kirchoff K."/>
            <person name="Toth K."/>
            <person name="King L."/>
            <person name="Bahret A."/>
            <person name="Miller B."/>
            <person name="Marra M.A."/>
            <person name="Martienssen R."/>
            <person name="McCombie W.R."/>
            <person name="Wilson R.K."/>
            <person name="Murphy G."/>
            <person name="Bancroft I."/>
            <person name="Volckaert G."/>
            <person name="Wambutt R."/>
            <person name="Duesterhoeft A."/>
            <person name="Stiekema W."/>
            <person name="Pohl T."/>
            <person name="Entian K.-D."/>
            <person name="Terryn N."/>
            <person name="Hartley N."/>
            <person name="Bent E."/>
            <person name="Johnson S."/>
            <person name="Langham S.-A."/>
            <person name="McCullagh B."/>
            <person name="Robben J."/>
            <person name="Grymonprez B."/>
            <person name="Zimmermann W."/>
            <person name="Ramsperger U."/>
            <person name="Wedler H."/>
            <person name="Balke K."/>
            <person name="Wedler E."/>
            <person name="Peters S."/>
            <person name="van Staveren M."/>
            <person name="Dirkse W."/>
            <person name="Mooijman P."/>
            <person name="Klein Lankhorst R."/>
            <person name="Weitzenegger T."/>
            <person name="Bothe G."/>
            <person name="Rose M."/>
            <person name="Hauf J."/>
            <person name="Berneiser S."/>
            <person name="Hempel S."/>
            <person name="Feldpausch M."/>
            <person name="Lamberth S."/>
            <person name="Villarroel R."/>
            <person name="Gielen J."/>
            <person name="Ardiles W."/>
            <person name="Bents O."/>
            <person name="Lemcke K."/>
            <person name="Kolesov G."/>
            <person name="Mayer K.F.X."/>
            <person name="Rudd S."/>
            <person name="Schoof H."/>
            <person name="Schueller C."/>
            <person name="Zaccaria P."/>
            <person name="Mewes H.-W."/>
            <person name="Bevan M."/>
            <person name="Fransz P.F."/>
        </authorList>
    </citation>
    <scope>NUCLEOTIDE SEQUENCE [LARGE SCALE GENOMIC DNA]</scope>
    <source>
        <strain>cv. Columbia</strain>
    </source>
</reference>
<reference key="2">
    <citation type="journal article" date="2017" name="Plant J.">
        <title>Araport11: a complete reannotation of the Arabidopsis thaliana reference genome.</title>
        <authorList>
            <person name="Cheng C.Y."/>
            <person name="Krishnakumar V."/>
            <person name="Chan A.P."/>
            <person name="Thibaud-Nissen F."/>
            <person name="Schobel S."/>
            <person name="Town C.D."/>
        </authorList>
    </citation>
    <scope>GENOME REANNOTATION</scope>
    <source>
        <strain>cv. Columbia</strain>
    </source>
</reference>
<reference key="3">
    <citation type="journal article" date="2002" name="Science">
        <title>Functional annotation of a full-length Arabidopsis cDNA collection.</title>
        <authorList>
            <person name="Seki M."/>
            <person name="Narusaka M."/>
            <person name="Kamiya A."/>
            <person name="Ishida J."/>
            <person name="Satou M."/>
            <person name="Sakurai T."/>
            <person name="Nakajima M."/>
            <person name="Enju A."/>
            <person name="Akiyama K."/>
            <person name="Oono Y."/>
            <person name="Muramatsu M."/>
            <person name="Hayashizaki Y."/>
            <person name="Kawai J."/>
            <person name="Carninci P."/>
            <person name="Itoh M."/>
            <person name="Ishii Y."/>
            <person name="Arakawa T."/>
            <person name="Shibata K."/>
            <person name="Shinagawa A."/>
            <person name="Shinozaki K."/>
        </authorList>
    </citation>
    <scope>NUCLEOTIDE SEQUENCE [LARGE SCALE MRNA] OF 68-412</scope>
    <source>
        <strain>cv. Columbia</strain>
    </source>
</reference>
<reference key="4">
    <citation type="journal article" date="2001" name="Cell Stress Chaperones">
        <title>Arabidopsis and the heat stress transcription factor world: how many heat stress transcription factors do we need?</title>
        <authorList>
            <person name="Nover L."/>
            <person name="Bharti K."/>
            <person name="Doering P."/>
            <person name="Mishra S.K."/>
            <person name="Ganguli A."/>
            <person name="Scharf K.-D."/>
        </authorList>
    </citation>
    <scope>GENE FAMILY</scope>
    <scope>NOMENCLATURE</scope>
    <scope>DOMAIN AHA</scope>
</reference>
<reference key="5">
    <citation type="journal article" date="2008" name="Biochem. Biophys. Res. Commun.">
        <title>Functional analysis of an Arabidopsis heat-shock transcription factor HsfA3 in the transcriptional cascade downstream of the DREB2A stress-regulatory system.</title>
        <authorList>
            <person name="Yoshida T."/>
            <person name="Sakuma Y."/>
            <person name="Todaka D."/>
            <person name="Maruyama K."/>
            <person name="Qin F."/>
            <person name="Mizoi J."/>
            <person name="Kidokoro S."/>
            <person name="Fujita Y."/>
            <person name="Shinozaki K."/>
            <person name="Yamaguchi-Shinozaki K."/>
        </authorList>
    </citation>
    <scope>FUNCTION</scope>
    <scope>SUBCELLULAR LOCATION</scope>
    <scope>INDUCTION</scope>
</reference>
<reference key="6">
    <citation type="journal article" date="2008" name="J. Genet. Genomics">
        <title>Genome-wide analysis of heat shock transcription factor families in rice and Arabidopsis.</title>
        <authorList>
            <person name="Guo J."/>
            <person name="Wu J."/>
            <person name="Ji Q."/>
            <person name="Wang C."/>
            <person name="Luo L."/>
            <person name="Yuan Y."/>
            <person name="Wang Y."/>
            <person name="Wang J."/>
        </authorList>
    </citation>
    <scope>GENE FAMILY</scope>
    <scope>NOMENCLATURE</scope>
</reference>
<reference key="7">
    <citation type="journal article" date="2008" name="Plant J.">
        <title>A cascade of transcription factor DREB2A and heat stress transcription factor HsfA3 regulates the heat stress response of Arabidopsis.</title>
        <authorList>
            <person name="Schramm F."/>
            <person name="Larkindale J."/>
            <person name="Kiehlmann E."/>
            <person name="Ganguli A."/>
            <person name="Englich G."/>
            <person name="Vierling E."/>
            <person name="von Koskull-Doering P."/>
        </authorList>
    </citation>
    <scope>FUNCTION</scope>
    <scope>INDUCTION</scope>
</reference>
<proteinExistence type="evidence at protein level"/>
<evidence type="ECO:0000250" key="1"/>
<evidence type="ECO:0000255" key="2"/>
<evidence type="ECO:0000256" key="3">
    <source>
        <dbReference type="SAM" id="MobiDB-lite"/>
    </source>
</evidence>
<evidence type="ECO:0000269" key="4">
    <source>
    </source>
</evidence>
<evidence type="ECO:0000269" key="5">
    <source>
    </source>
</evidence>
<evidence type="ECO:0000269" key="6">
    <source>
    </source>
</evidence>
<evidence type="ECO:0000305" key="7"/>
<sequence>MSPKKDAVSKPTPISVPVSRRSDIPGSLYVDTDMGFSGSPLPMPLDILQGNPIPPFLSKTFDLVDDPTLDPVISWGLTGASFVVWDPLEFARIILPRNFKHNNFSSFVRQLNTYGFRKIDTDKWEFANEAFLRGKKHLLKNIHRRRSPQSNQTCCSSTSQSQGSPTEVGGEIEKLRKERRALMEEMVELQQQSRGTARHVDTVNQRLKAAEQRQKQLLSFLAKLFQNRGFLERLKNFKGKEKGGALGLEKARKKFIKHHQQPQDSPTGGEVVKYEADDWERLLMYDEETENTKGLGGMTSSDPKGKNLMYPSEEEMSKPDYLMSFPSPEGLIKQEETTWSMGFDTTIPSFSNTDAWGNTMDYNDVSEFGFAAETTSDGLPDVCWEQFAAGITETGFNWPTGDDDDNTPMNDP</sequence>
<keyword id="KW-0010">Activator</keyword>
<keyword id="KW-0175">Coiled coil</keyword>
<keyword id="KW-0238">DNA-binding</keyword>
<keyword id="KW-0539">Nucleus</keyword>
<keyword id="KW-0597">Phosphoprotein</keyword>
<keyword id="KW-1185">Reference proteome</keyword>
<keyword id="KW-0677">Repeat</keyword>
<keyword id="KW-0346">Stress response</keyword>
<keyword id="KW-0804">Transcription</keyword>
<keyword id="KW-0805">Transcription regulation</keyword>
<accession>Q8GYY1</accession>
<accession>Q9LZR6</accession>
<organism>
    <name type="scientific">Arabidopsis thaliana</name>
    <name type="common">Mouse-ear cress</name>
    <dbReference type="NCBI Taxonomy" id="3702"/>
    <lineage>
        <taxon>Eukaryota</taxon>
        <taxon>Viridiplantae</taxon>
        <taxon>Streptophyta</taxon>
        <taxon>Embryophyta</taxon>
        <taxon>Tracheophyta</taxon>
        <taxon>Spermatophyta</taxon>
        <taxon>Magnoliopsida</taxon>
        <taxon>eudicotyledons</taxon>
        <taxon>Gunneridae</taxon>
        <taxon>Pentapetalae</taxon>
        <taxon>rosids</taxon>
        <taxon>malvids</taxon>
        <taxon>Brassicales</taxon>
        <taxon>Brassicaceae</taxon>
        <taxon>Camelineae</taxon>
        <taxon>Arabidopsis</taxon>
    </lineage>
</organism>
<gene>
    <name type="primary">HSFA3</name>
    <name type="synonym">HSF17</name>
    <name type="ordered locus">At5g03720</name>
    <name type="ORF">F17C15.140</name>
</gene>
<protein>
    <recommendedName>
        <fullName>Heat stress transcription factor A-3</fullName>
        <shortName>AtHsfA3</shortName>
    </recommendedName>
    <alternativeName>
        <fullName>AtHsf-17</fullName>
    </alternativeName>
</protein>
<comment type="function">
    <text evidence="5 6">Transcriptional activator that specifically binds DNA sequence 5'-AGAAnnTTCT-3' known as heat shock promoter elements (HSE). Involved in heat stress response. Activated by DREB2A under heat stress.</text>
</comment>
<comment type="subunit">
    <text evidence="1">Homotrimer.</text>
</comment>
<comment type="interaction">
    <interactant intactId="EBI-15198195">
        <id>Q8GYY1</id>
    </interactant>
    <interactant intactId="EBI-4457746">
        <id>Q9LV52</id>
        <label>HSFC1</label>
    </interactant>
    <organismsDiffer>false</organismsDiffer>
    <experiments>3</experiments>
</comment>
<comment type="interaction">
    <interactant intactId="EBI-15198195">
        <id>Q8GYY1</id>
    </interactant>
    <interactant intactId="EBI-15204858">
        <id>Q9FMC8</id>
        <label>OFP13</label>
    </interactant>
    <organismsDiffer>false</organismsDiffer>
    <experiments>3</experiments>
</comment>
<comment type="subcellular location">
    <subcellularLocation>
        <location evidence="6">Nucleus</location>
    </subcellularLocation>
    <text>Detected under heat stress condition.</text>
</comment>
<comment type="induction">
    <text evidence="5 6">By heat stress.</text>
</comment>
<comment type="domain">
    <text evidence="4">The hydrophobic-rich region (HR-A/B) corresponds to the oligomerization domain. AHA motifs are transcriptional activator elements.</text>
</comment>
<comment type="PTM">
    <text evidence="1">Exhibits temperature-dependent phosphorylation.</text>
</comment>
<comment type="miscellaneous">
    <text>Plants overexpressing HSFA3 show increased thermotolerance.</text>
</comment>
<comment type="similarity">
    <text evidence="7">Belongs to the HSF family. Class A subfamily.</text>
</comment>
<comment type="sequence caution" evidence="7">
    <conflict type="erroneous initiation">
        <sequence resource="EMBL-CDS" id="BAC41989"/>
    </conflict>
</comment>
<comment type="sequence caution" evidence="7">
    <conflict type="erroneous gene model prediction">
        <sequence resource="EMBL-CDS" id="CAB82937"/>
    </conflict>
</comment>
<dbReference type="EMBL" id="AL162506">
    <property type="protein sequence ID" value="CAB82937.1"/>
    <property type="status" value="ALT_SEQ"/>
    <property type="molecule type" value="Genomic_DNA"/>
</dbReference>
<dbReference type="EMBL" id="CP002688">
    <property type="protein sequence ID" value="AED90646.1"/>
    <property type="molecule type" value="Genomic_DNA"/>
</dbReference>
<dbReference type="EMBL" id="CP002688">
    <property type="protein sequence ID" value="ANM70765.1"/>
    <property type="molecule type" value="Genomic_DNA"/>
</dbReference>
<dbReference type="EMBL" id="AK117318">
    <property type="protein sequence ID" value="BAC41989.1"/>
    <property type="status" value="ALT_INIT"/>
    <property type="molecule type" value="mRNA"/>
</dbReference>
<dbReference type="PIR" id="T48399">
    <property type="entry name" value="T48399"/>
</dbReference>
<dbReference type="RefSeq" id="NP_001318473.1">
    <property type="nucleotide sequence ID" value="NM_001342728.1"/>
</dbReference>
<dbReference type="RefSeq" id="NP_195992.2">
    <property type="nucleotide sequence ID" value="NM_120453.4"/>
</dbReference>
<dbReference type="SMR" id="Q8GYY1"/>
<dbReference type="BioGRID" id="17025">
    <property type="interactions" value="18"/>
</dbReference>
<dbReference type="FunCoup" id="Q8GYY1">
    <property type="interactions" value="895"/>
</dbReference>
<dbReference type="IntAct" id="Q8GYY1">
    <property type="interactions" value="17"/>
</dbReference>
<dbReference type="STRING" id="3702.Q8GYY1"/>
<dbReference type="iPTMnet" id="Q8GYY1"/>
<dbReference type="PaxDb" id="3702-AT5G03720.1"/>
<dbReference type="ProteomicsDB" id="232110"/>
<dbReference type="EnsemblPlants" id="AT5G03720.1">
    <property type="protein sequence ID" value="AT5G03720.1"/>
    <property type="gene ID" value="AT5G03720"/>
</dbReference>
<dbReference type="EnsemblPlants" id="AT5G03720.2">
    <property type="protein sequence ID" value="AT5G03720.2"/>
    <property type="gene ID" value="AT5G03720"/>
</dbReference>
<dbReference type="GeneID" id="831749"/>
<dbReference type="Gramene" id="AT5G03720.1">
    <property type="protein sequence ID" value="AT5G03720.1"/>
    <property type="gene ID" value="AT5G03720"/>
</dbReference>
<dbReference type="Gramene" id="AT5G03720.2">
    <property type="protein sequence ID" value="AT5G03720.2"/>
    <property type="gene ID" value="AT5G03720"/>
</dbReference>
<dbReference type="KEGG" id="ath:AT5G03720"/>
<dbReference type="Araport" id="AT5G03720"/>
<dbReference type="TAIR" id="AT5G03720">
    <property type="gene designation" value="HSFA3"/>
</dbReference>
<dbReference type="eggNOG" id="KOG0627">
    <property type="taxonomic scope" value="Eukaryota"/>
</dbReference>
<dbReference type="HOGENOM" id="CLU_030308_9_0_1"/>
<dbReference type="InParanoid" id="Q8GYY1"/>
<dbReference type="OMA" id="GLPDVCW"/>
<dbReference type="PhylomeDB" id="Q8GYY1"/>
<dbReference type="PRO" id="PR:Q8GYY1"/>
<dbReference type="Proteomes" id="UP000006548">
    <property type="component" value="Chromosome 5"/>
</dbReference>
<dbReference type="ExpressionAtlas" id="Q8GYY1">
    <property type="expression patterns" value="baseline and differential"/>
</dbReference>
<dbReference type="GO" id="GO:0005634">
    <property type="term" value="C:nucleus"/>
    <property type="evidence" value="ECO:0000314"/>
    <property type="project" value="TAIR"/>
</dbReference>
<dbReference type="GO" id="GO:0003677">
    <property type="term" value="F:DNA binding"/>
    <property type="evidence" value="ECO:0000314"/>
    <property type="project" value="TAIR"/>
</dbReference>
<dbReference type="GO" id="GO:0003700">
    <property type="term" value="F:DNA-binding transcription factor activity"/>
    <property type="evidence" value="ECO:0000250"/>
    <property type="project" value="TAIR"/>
</dbReference>
<dbReference type="GO" id="GO:0043565">
    <property type="term" value="F:sequence-specific DNA binding"/>
    <property type="evidence" value="ECO:0007669"/>
    <property type="project" value="InterPro"/>
</dbReference>
<dbReference type="GO" id="GO:0006355">
    <property type="term" value="P:regulation of DNA-templated transcription"/>
    <property type="evidence" value="ECO:0000314"/>
    <property type="project" value="TAIR"/>
</dbReference>
<dbReference type="GO" id="GO:0009408">
    <property type="term" value="P:response to heat"/>
    <property type="evidence" value="ECO:0000270"/>
    <property type="project" value="TAIR"/>
</dbReference>
<dbReference type="FunFam" id="1.10.10.10:FF:000057">
    <property type="entry name" value="Heat shock transcription factor 1"/>
    <property type="match status" value="1"/>
</dbReference>
<dbReference type="Gene3D" id="1.10.10.10">
    <property type="entry name" value="Winged helix-like DNA-binding domain superfamily/Winged helix DNA-binding domain"/>
    <property type="match status" value="1"/>
</dbReference>
<dbReference type="InterPro" id="IPR000232">
    <property type="entry name" value="HSF_DNA-bd"/>
</dbReference>
<dbReference type="InterPro" id="IPR036388">
    <property type="entry name" value="WH-like_DNA-bd_sf"/>
</dbReference>
<dbReference type="InterPro" id="IPR036390">
    <property type="entry name" value="WH_DNA-bd_sf"/>
</dbReference>
<dbReference type="PANTHER" id="PTHR10015">
    <property type="entry name" value="HEAT SHOCK TRANSCRIPTION FACTOR"/>
    <property type="match status" value="1"/>
</dbReference>
<dbReference type="PANTHER" id="PTHR10015:SF337">
    <property type="entry name" value="HEAT STRESS TRANSCRIPTION FACTOR A-3"/>
    <property type="match status" value="1"/>
</dbReference>
<dbReference type="Pfam" id="PF00447">
    <property type="entry name" value="HSF_DNA-bind"/>
    <property type="match status" value="1"/>
</dbReference>
<dbReference type="PRINTS" id="PR00056">
    <property type="entry name" value="HSFDOMAIN"/>
</dbReference>
<dbReference type="SMART" id="SM00415">
    <property type="entry name" value="HSF"/>
    <property type="match status" value="1"/>
</dbReference>
<dbReference type="SUPFAM" id="SSF46785">
    <property type="entry name" value="Winged helix' DNA-binding domain"/>
    <property type="match status" value="1"/>
</dbReference>
<dbReference type="PROSITE" id="PS00434">
    <property type="entry name" value="HSF_DOMAIN"/>
    <property type="match status" value="1"/>
</dbReference>
<feature type="chain" id="PRO_0000270803" description="Heat stress transcription factor A-3">
    <location>
        <begin position="1"/>
        <end position="412"/>
    </location>
</feature>
<feature type="DNA-binding region" evidence="1">
    <location>
        <begin position="53"/>
        <end position="147"/>
    </location>
</feature>
<feature type="region of interest" description="Disordered" evidence="3">
    <location>
        <begin position="144"/>
        <end position="170"/>
    </location>
</feature>
<feature type="region of interest" description="Hydrophobic repeat HR-A/B">
    <location>
        <begin position="159"/>
        <end position="225"/>
    </location>
</feature>
<feature type="coiled-coil region" evidence="2">
    <location>
        <begin position="166"/>
        <end position="224"/>
    </location>
</feature>
<feature type="short sequence motif" description="Bipartite nuclear localization signal" evidence="2">
    <location>
        <begin position="238"/>
        <end position="254"/>
    </location>
</feature>
<feature type="short sequence motif" description="AHA1">
    <location>
        <begin position="277"/>
        <end position="286"/>
    </location>
</feature>
<feature type="short sequence motif" description="AHA2">
    <location>
        <begin position="381"/>
        <end position="390"/>
    </location>
</feature>
<feature type="compositionally biased region" description="Low complexity" evidence="3">
    <location>
        <begin position="148"/>
        <end position="166"/>
    </location>
</feature>